<proteinExistence type="predicted"/>
<name>LPID_ECOL6</name>
<keyword id="KW-0028">Amino-acid biosynthesis</keyword>
<keyword id="KW-0100">Branched-chain amino acid biosynthesis</keyword>
<keyword id="KW-0428">Leader peptide</keyword>
<keyword id="KW-1185">Reference proteome</keyword>
<accession>P62523</accession>
<accession>P03060</accession>
<dbReference type="EMBL" id="AE014075">
    <property type="protein sequence ID" value="AAN83121.1"/>
    <property type="molecule type" value="Genomic_DNA"/>
</dbReference>
<dbReference type="RefSeq" id="WP_001311244.1">
    <property type="nucleotide sequence ID" value="NZ_CP051263.1"/>
</dbReference>
<dbReference type="STRING" id="199310.c5500"/>
<dbReference type="GeneID" id="98391002"/>
<dbReference type="KEGG" id="ecc:c5500"/>
<dbReference type="eggNOG" id="ENOG5033NES">
    <property type="taxonomic scope" value="Bacteria"/>
</dbReference>
<dbReference type="HOGENOM" id="CLU_220955_0_0_6"/>
<dbReference type="BioCyc" id="ECOL199310:C5500-MONOMER"/>
<dbReference type="Proteomes" id="UP000001410">
    <property type="component" value="Chromosome"/>
</dbReference>
<dbReference type="GO" id="GO:0008652">
    <property type="term" value="P:amino acid biosynthetic process"/>
    <property type="evidence" value="ECO:0007669"/>
    <property type="project" value="UniProtKB-KW"/>
</dbReference>
<dbReference type="GO" id="GO:0009082">
    <property type="term" value="P:branched-chain amino acid biosynthetic process"/>
    <property type="evidence" value="ECO:0007669"/>
    <property type="project" value="UniProtKB-KW"/>
</dbReference>
<dbReference type="InterPro" id="IPR012567">
    <property type="entry name" value="IlvGEDA_leader"/>
</dbReference>
<dbReference type="NCBIfam" id="NF007744">
    <property type="entry name" value="PRK10424.1"/>
    <property type="match status" value="1"/>
</dbReference>
<dbReference type="Pfam" id="PF08046">
    <property type="entry name" value="IlvGEDA_leader"/>
    <property type="match status" value="1"/>
</dbReference>
<sequence>MTALLRVISLVVISVVVIIIPPCGAALGRGKA</sequence>
<organism>
    <name type="scientific">Escherichia coli O6:H1 (strain CFT073 / ATCC 700928 / UPEC)</name>
    <dbReference type="NCBI Taxonomy" id="199310"/>
    <lineage>
        <taxon>Bacteria</taxon>
        <taxon>Pseudomonadati</taxon>
        <taxon>Pseudomonadota</taxon>
        <taxon>Gammaproteobacteria</taxon>
        <taxon>Enterobacterales</taxon>
        <taxon>Enterobacteriaceae</taxon>
        <taxon>Escherichia</taxon>
    </lineage>
</organism>
<feature type="peptide" id="PRO_0000044753" description="ilv operon leader peptide">
    <location>
        <begin position="1"/>
        <end position="32"/>
    </location>
</feature>
<reference key="1">
    <citation type="journal article" date="2002" name="Proc. Natl. Acad. Sci. U.S.A.">
        <title>Extensive mosaic structure revealed by the complete genome sequence of uropathogenic Escherichia coli.</title>
        <authorList>
            <person name="Welch R.A."/>
            <person name="Burland V."/>
            <person name="Plunkett G. III"/>
            <person name="Redford P."/>
            <person name="Roesch P."/>
            <person name="Rasko D."/>
            <person name="Buckles E.L."/>
            <person name="Liou S.-R."/>
            <person name="Boutin A."/>
            <person name="Hackett J."/>
            <person name="Stroud D."/>
            <person name="Mayhew G.F."/>
            <person name="Rose D.J."/>
            <person name="Zhou S."/>
            <person name="Schwartz D.C."/>
            <person name="Perna N.T."/>
            <person name="Mobley H.L.T."/>
            <person name="Donnenberg M.S."/>
            <person name="Blattner F.R."/>
        </authorList>
    </citation>
    <scope>NUCLEOTIDE SEQUENCE [LARGE SCALE GENOMIC DNA]</scope>
    <source>
        <strain>CFT073 / ATCC 700928 / UPEC</strain>
    </source>
</reference>
<gene>
    <name type="primary">ilvL</name>
    <name type="ordered locus">c5500</name>
</gene>
<protein>
    <recommendedName>
        <fullName>ilv operon leader peptide</fullName>
    </recommendedName>
    <alternativeName>
        <fullName>ilvGMEDA operon attenuator peptide</fullName>
    </alternativeName>
</protein>